<comment type="function">
    <text evidence="2 3 7">Bifunctional terpene synthase; part of the gene cluster that mediates the biosynthesis of the diterpene ent-pimara-8(14),15-diene (PD) (PubMed:22506079, PubMed:27098256). Within the cluster, the HMG-CoA reductase AN1593 functions in the mevalonate pathway, which produces isoprenoid precursors (PubMed:22506079, PubMed:27098256). The geranylgeranyl pyrophosphate (GGPP) synthase AN1592 is needed in the formation of GGPP, the precursor for diterpenes (PubMed:22506079, PubMed:27098256). Lastly, the pimaradiene synthase pbcA performs the 2 cyclization steps that convert GGPP to ent-pimara-8(14),15-diene with ent-copalyl diphosphate as an intermediate (PubMed:22506079, PubMed:27098256). The putative roles of the remaining cluster enzymes in ent-pimara-8(14),15-diene biosynthesis is unclear (Probable). The cytochrome P450 monooxygenase AN1598, the glutathione S-transferase AN1595, the oxidoreductases AN1596 and AN1597 probably function as decorative enzymes (Probable). It is possible that in biological conditions the compound is oxidized to ent-pimara-8(14),15-dien-19-oic acid, which is a bioactive diterpene compound predominant in many plant extracts (Probable).</text>
</comment>
<comment type="catalytic activity">
    <reaction evidence="8">
        <text>(2E,6E,10E)-geranylgeranyl diphosphate = ent-copalyl diphosphate</text>
        <dbReference type="Rhea" id="RHEA:14841"/>
        <dbReference type="ChEBI" id="CHEBI:58553"/>
        <dbReference type="ChEBI" id="CHEBI:58756"/>
        <dbReference type="EC" id="5.5.1.13"/>
    </reaction>
    <physiologicalReaction direction="left-to-right" evidence="8">
        <dbReference type="Rhea" id="RHEA:14842"/>
    </physiologicalReaction>
</comment>
<comment type="catalytic activity">
    <reaction evidence="8">
        <text>ent-copalyl diphosphate = ent-pimara-8(14),15-diene + diphosphate</text>
        <dbReference type="Rhea" id="RHEA:25540"/>
        <dbReference type="ChEBI" id="CHEBI:33019"/>
        <dbReference type="ChEBI" id="CHEBI:50063"/>
        <dbReference type="ChEBI" id="CHEBI:58553"/>
        <dbReference type="EC" id="4.2.3.30"/>
    </reaction>
    <physiologicalReaction direction="left-to-right" evidence="8">
        <dbReference type="Rhea" id="RHEA:25541"/>
    </physiologicalReaction>
</comment>
<comment type="cofactor">
    <cofactor evidence="1">
        <name>Mg(2+)</name>
        <dbReference type="ChEBI" id="CHEBI:18420"/>
    </cofactor>
</comment>
<comment type="pathway">
    <text evidence="3">Secondary metabolite biosynthesis; terpenoid biosynthesis.</text>
</comment>
<comment type="induction">
    <text evidence="2 3">Expression is positively regulated by the cluster-specific transcription factor pbcR.</text>
</comment>
<comment type="domain">
    <text evidence="7">The VYDTAW motif is widely conserved among diterpene cyclases in plants and fungi.</text>
</comment>
<comment type="domain">
    <text evidence="7">The DXDD B-type cyclization motif at positions 328-331 is responsible for the formation of ent-CDP.</text>
</comment>
<comment type="domain">
    <text evidence="7">The DEXXE A-type cyclization motif at positions 664-668 is responsible for the formation of ent-kaurene.</text>
</comment>
<comment type="disruption phenotype">
    <text evidence="3">Abolishes the production of ent-pimara-8(14),15-diene (PD).</text>
</comment>
<comment type="similarity">
    <text evidence="6">Belongs to the terpene synthase family.</text>
</comment>
<evidence type="ECO:0000250" key="1">
    <source>
        <dbReference type="UniProtKB" id="Q40577"/>
    </source>
</evidence>
<evidence type="ECO:0000269" key="2">
    <source>
    </source>
</evidence>
<evidence type="ECO:0000269" key="3">
    <source>
    </source>
</evidence>
<evidence type="ECO:0000303" key="4">
    <source>
    </source>
</evidence>
<evidence type="ECO:0000303" key="5">
    <source>
    </source>
</evidence>
<evidence type="ECO:0000305" key="6"/>
<evidence type="ECO:0000305" key="7">
    <source>
    </source>
</evidence>
<evidence type="ECO:0000305" key="8">
    <source>
    </source>
</evidence>
<reference key="1">
    <citation type="journal article" date="2005" name="Nature">
        <title>Sequencing of Aspergillus nidulans and comparative analysis with A. fumigatus and A. oryzae.</title>
        <authorList>
            <person name="Galagan J.E."/>
            <person name="Calvo S.E."/>
            <person name="Cuomo C."/>
            <person name="Ma L.-J."/>
            <person name="Wortman J.R."/>
            <person name="Batzoglou S."/>
            <person name="Lee S.-I."/>
            <person name="Bastuerkmen M."/>
            <person name="Spevak C.C."/>
            <person name="Clutterbuck J."/>
            <person name="Kapitonov V."/>
            <person name="Jurka J."/>
            <person name="Scazzocchio C."/>
            <person name="Farman M.L."/>
            <person name="Butler J."/>
            <person name="Purcell S."/>
            <person name="Harris S."/>
            <person name="Braus G.H."/>
            <person name="Draht O."/>
            <person name="Busch S."/>
            <person name="D'Enfert C."/>
            <person name="Bouchier C."/>
            <person name="Goldman G.H."/>
            <person name="Bell-Pedersen D."/>
            <person name="Griffiths-Jones S."/>
            <person name="Doonan J.H."/>
            <person name="Yu J."/>
            <person name="Vienken K."/>
            <person name="Pain A."/>
            <person name="Freitag M."/>
            <person name="Selker E.U."/>
            <person name="Archer D.B."/>
            <person name="Penalva M.A."/>
            <person name="Oakley B.R."/>
            <person name="Momany M."/>
            <person name="Tanaka T."/>
            <person name="Kumagai T."/>
            <person name="Asai K."/>
            <person name="Machida M."/>
            <person name="Nierman W.C."/>
            <person name="Denning D.W."/>
            <person name="Caddick M.X."/>
            <person name="Hynes M."/>
            <person name="Paoletti M."/>
            <person name="Fischer R."/>
            <person name="Miller B.L."/>
            <person name="Dyer P.S."/>
            <person name="Sachs M.S."/>
            <person name="Osmani S.A."/>
            <person name="Birren B.W."/>
        </authorList>
    </citation>
    <scope>NUCLEOTIDE SEQUENCE [LARGE SCALE GENOMIC DNA]</scope>
    <source>
        <strain>FGSC A4 / ATCC 38163 / CBS 112.46 / NRRL 194 / M139</strain>
    </source>
</reference>
<reference key="2">
    <citation type="journal article" date="2009" name="Fungal Genet. Biol.">
        <title>The 2008 update of the Aspergillus nidulans genome annotation: a community effort.</title>
        <authorList>
            <person name="Wortman J.R."/>
            <person name="Gilsenan J.M."/>
            <person name="Joardar V."/>
            <person name="Deegan J."/>
            <person name="Clutterbuck J."/>
            <person name="Andersen M.R."/>
            <person name="Archer D."/>
            <person name="Bencina M."/>
            <person name="Braus G."/>
            <person name="Coutinho P."/>
            <person name="von Dohren H."/>
            <person name="Doonan J."/>
            <person name="Driessen A.J."/>
            <person name="Durek P."/>
            <person name="Espeso E."/>
            <person name="Fekete E."/>
            <person name="Flipphi M."/>
            <person name="Estrada C.G."/>
            <person name="Geysens S."/>
            <person name="Goldman G."/>
            <person name="de Groot P.W."/>
            <person name="Hansen K."/>
            <person name="Harris S.D."/>
            <person name="Heinekamp T."/>
            <person name="Helmstaedt K."/>
            <person name="Henrissat B."/>
            <person name="Hofmann G."/>
            <person name="Homan T."/>
            <person name="Horio T."/>
            <person name="Horiuchi H."/>
            <person name="James S."/>
            <person name="Jones M."/>
            <person name="Karaffa L."/>
            <person name="Karanyi Z."/>
            <person name="Kato M."/>
            <person name="Keller N."/>
            <person name="Kelly D.E."/>
            <person name="Kiel J.A."/>
            <person name="Kim J.M."/>
            <person name="van der Klei I.J."/>
            <person name="Klis F.M."/>
            <person name="Kovalchuk A."/>
            <person name="Krasevec N."/>
            <person name="Kubicek C.P."/>
            <person name="Liu B."/>
            <person name="Maccabe A."/>
            <person name="Meyer V."/>
            <person name="Mirabito P."/>
            <person name="Miskei M."/>
            <person name="Mos M."/>
            <person name="Mullins J."/>
            <person name="Nelson D.R."/>
            <person name="Nielsen J."/>
            <person name="Oakley B.R."/>
            <person name="Osmani S.A."/>
            <person name="Pakula T."/>
            <person name="Paszewski A."/>
            <person name="Paulsen I."/>
            <person name="Pilsyk S."/>
            <person name="Pocsi I."/>
            <person name="Punt P.J."/>
            <person name="Ram A.F."/>
            <person name="Ren Q."/>
            <person name="Robellet X."/>
            <person name="Robson G."/>
            <person name="Seiboth B."/>
            <person name="van Solingen P."/>
            <person name="Specht T."/>
            <person name="Sun J."/>
            <person name="Taheri-Talesh N."/>
            <person name="Takeshita N."/>
            <person name="Ussery D."/>
            <person name="vanKuyk P.A."/>
            <person name="Visser H."/>
            <person name="van de Vondervoort P.J."/>
            <person name="de Vries R.P."/>
            <person name="Walton J."/>
            <person name="Xiang X."/>
            <person name="Xiong Y."/>
            <person name="Zeng A.P."/>
            <person name="Brandt B.W."/>
            <person name="Cornell M.J."/>
            <person name="van den Hondel C.A."/>
            <person name="Visser J."/>
            <person name="Oliver S.G."/>
            <person name="Turner G."/>
        </authorList>
    </citation>
    <scope>GENOME REANNOTATION</scope>
    <source>
        <strain>FGSC A4 / ATCC 38163 / CBS 112.46 / NRRL 194 / M139</strain>
    </source>
</reference>
<reference key="3">
    <citation type="journal article" date="2012" name="PLoS ONE">
        <title>Identification and characterization of a novel diterpene gene cluster in Aspergillus nidulans.</title>
        <authorList>
            <person name="Bromann K."/>
            <person name="Toivari M."/>
            <person name="Viljanen K."/>
            <person name="Vuoristo A."/>
            <person name="Ruohonen L."/>
            <person name="Nakari-Setaelae T."/>
        </authorList>
    </citation>
    <scope>FUNCTION</scope>
    <scope>INDUCTION</scope>
    <scope>DOMAIN</scope>
    <scope>PATHWAY</scope>
</reference>
<reference key="4">
    <citation type="journal article" date="2016" name="Appl. Microbiol. Biotechnol.">
        <title>Engineering Aspergillus nidulans for heterologous ent-kaurene and gamma-terpinene production.</title>
        <authorList>
            <person name="Bromann K."/>
            <person name="Toivari M."/>
            <person name="Viljanen K."/>
            <person name="Ruohonen L."/>
            <person name="Nakari-Setaelae T."/>
        </authorList>
    </citation>
    <scope>FUNCTION</scope>
    <scope>INDUCTION</scope>
    <scope>DISRUPTION PHENOTYPE</scope>
</reference>
<organism>
    <name type="scientific">Emericella nidulans (strain FGSC A4 / ATCC 38163 / CBS 112.46 / NRRL 194 / M139)</name>
    <name type="common">Aspergillus nidulans</name>
    <dbReference type="NCBI Taxonomy" id="227321"/>
    <lineage>
        <taxon>Eukaryota</taxon>
        <taxon>Fungi</taxon>
        <taxon>Dikarya</taxon>
        <taxon>Ascomycota</taxon>
        <taxon>Pezizomycotina</taxon>
        <taxon>Eurotiomycetes</taxon>
        <taxon>Eurotiomycetidae</taxon>
        <taxon>Eurotiales</taxon>
        <taxon>Aspergillaceae</taxon>
        <taxon>Aspergillus</taxon>
        <taxon>Aspergillus subgen. Nidulantes</taxon>
    </lineage>
</organism>
<sequence length="979" mass="110118">MTCADVTDLCTQASQLVQQLRTKDGELGFMSAAVYDTAWVSMVQKTTPEGRQWLLPKCFEYILRTQLEDGSWETYASDVDGILNTAASLLALETHAESRIASTDPPVEEMKERIGRARAALSRQLQAWSVKDTVHVGFEIILPALLRLLREKGHEFEFDGRAELDRLNRIKLSKFRPEYLYSARTTALHSLEAFVGMIDFDKVAHQKVNGSFMFSPSSTAAFLMFSSSWDDECEQYLRLVLQNGAGGGTGGMPSAYPSKYFEVSWVRGQLARLESKLTELQALTTLLDNGYSTGDLGIEDTDSLGEMLRDALVKGGGIVGFAPSIQADADDTAKSLIAVSLLDKPVSAQGLIDAFEGPMHFRTYHGERDPSFTANSNVLLALLNTPDAATVSPQIEKAAAFLCDVWWTADSEIGDKWNLSPYYPSMLMAEAFGKLLQVWSDGGLKSISSQFIRDRVSVCLYQALVRTLQTQNENGSWGSHSHEETAYAILTIAHACQLPVVNQLWTNVQLAVSRGRKFLQNSAGDKAEYLWVEKVTYSSILLSKSYVLAALKVSFERSYPACLANLFIVSKKRVIEFARFHSMLPLFSSMELWKVRAAIVEGYLLLPQLRDRRLAVFSRTGMEEDKYFEYIPFTWTLCNNRRNTFLSTKTLVEMMVISFLNYQADEFMEAVVGRLNSSQRSMTRSCIDEIFRDLKDKPELNDAIQAQSGPRNADANGHRILPQAKRIKMGSQLPSDVSRVLSAFVHHVMDHPSVKAAAPLEYERVKNELQVFLLSHIEQADDNGRFAAQLESTRDDFETARSSFYRWVSSTSSDHTSCPYSFAFYQCLLGFEQASHNAACFQTCEEKYVAEAMCRHLAVMCRMYNDYGSLARDRDEKNLNCVNFPEFAQAGPKSDAVRQKQLFSLAEFERSNMKRGLEVLTEMAAQDRAKMRMLEKVQMFCDVTDVYGQIYALEILRVGCDLAHDCFMLELPAQWSNST</sequence>
<gene>
    <name evidence="5" type="primary">pbcA</name>
    <name type="ORF">AN1594</name>
    <name type="ORF">ANIA_01594</name>
</gene>
<proteinExistence type="evidence at transcript level"/>
<keyword id="KW-0413">Isomerase</keyword>
<keyword id="KW-0456">Lyase</keyword>
<keyword id="KW-0460">Magnesium</keyword>
<keyword id="KW-0479">Metal-binding</keyword>
<keyword id="KW-1185">Reference proteome</keyword>
<feature type="chain" id="PRO_0000450839" description="Pimaradiene synthase pbcA">
    <location>
        <begin position="1"/>
        <end position="979"/>
    </location>
</feature>
<feature type="short sequence motif" description="VYDTAW motif" evidence="7">
    <location>
        <begin position="34"/>
        <end position="39"/>
    </location>
</feature>
<feature type="short sequence motif" description="DXDD B-type cyclization motif" evidence="7">
    <location>
        <begin position="328"/>
        <end position="331"/>
    </location>
</feature>
<feature type="short sequence motif" description="DEXXE A-type cyclization motif" evidence="7">
    <location>
        <begin position="665"/>
        <end position="669"/>
    </location>
</feature>
<feature type="binding site" evidence="1">
    <location>
        <position position="665"/>
    </location>
    <ligand>
        <name>Mg(2+)</name>
        <dbReference type="ChEBI" id="CHEBI:18420"/>
        <label>1</label>
    </ligand>
</feature>
<feature type="binding site" evidence="1">
    <location>
        <position position="665"/>
    </location>
    <ligand>
        <name>Mg(2+)</name>
        <dbReference type="ChEBI" id="CHEBI:18420"/>
        <label>2</label>
    </ligand>
</feature>
<feature type="binding site" evidence="1">
    <location>
        <position position="669"/>
    </location>
    <ligand>
        <name>Mg(2+)</name>
        <dbReference type="ChEBI" id="CHEBI:18420"/>
        <label>1</label>
    </ligand>
</feature>
<feature type="binding site" evidence="1">
    <location>
        <position position="669"/>
    </location>
    <ligand>
        <name>Mg(2+)</name>
        <dbReference type="ChEBI" id="CHEBI:18420"/>
        <label>2</label>
    </ligand>
</feature>
<feature type="binding site" evidence="1">
    <location>
        <position position="865"/>
    </location>
    <ligand>
        <name>Mg(2+)</name>
        <dbReference type="ChEBI" id="CHEBI:18420"/>
        <label>3</label>
    </ligand>
</feature>
<feature type="binding site" evidence="1">
    <location>
        <position position="866"/>
    </location>
    <ligand>
        <name>Mg(2+)</name>
        <dbReference type="ChEBI" id="CHEBI:18420"/>
        <label>3</label>
    </ligand>
</feature>
<feature type="binding site" evidence="1">
    <location>
        <position position="869"/>
    </location>
    <ligand>
        <name>Mg(2+)</name>
        <dbReference type="ChEBI" id="CHEBI:18420"/>
        <label>3</label>
    </ligand>
</feature>
<feature type="binding site" evidence="1">
    <location>
        <position position="873"/>
    </location>
    <ligand>
        <name>Mg(2+)</name>
        <dbReference type="ChEBI" id="CHEBI:18420"/>
        <label>3</label>
    </ligand>
</feature>
<accession>A0A1U8QHE3</accession>
<accession>C8VN87</accession>
<accession>Q5BCY6</accession>
<protein>
    <recommendedName>
        <fullName evidence="5">Pimaradiene synthase pbcA</fullName>
        <ecNumber evidence="8">4.2.3.30</ecNumber>
        <ecNumber evidence="8">5.5.1.13</ecNumber>
    </recommendedName>
    <alternativeName>
        <fullName evidence="4">Bifunctional terpene synthase pbcA</fullName>
    </alternativeName>
    <alternativeName>
        <fullName evidence="4">Pimaradiene biosynthesis cluster protein A</fullName>
    </alternativeName>
    <alternativeName>
        <fullName evidence="5">ent-pimara-8(14),15-diene synthase</fullName>
    </alternativeName>
</protein>
<dbReference type="EC" id="4.2.3.30" evidence="8"/>
<dbReference type="EC" id="5.5.1.13" evidence="8"/>
<dbReference type="EMBL" id="AACD01000025">
    <property type="protein sequence ID" value="EAA64301.1"/>
    <property type="molecule type" value="Genomic_DNA"/>
</dbReference>
<dbReference type="EMBL" id="BN001307">
    <property type="protein sequence ID" value="CBF85181.1"/>
    <property type="molecule type" value="Genomic_DNA"/>
</dbReference>
<dbReference type="RefSeq" id="XP_659198.1">
    <property type="nucleotide sequence ID" value="XM_654106.1"/>
</dbReference>
<dbReference type="SMR" id="A0A1U8QHE3"/>
<dbReference type="STRING" id="227321.Q5BCY6"/>
<dbReference type="EnsemblFungi" id="CBF85181">
    <property type="protein sequence ID" value="CBF85181"/>
    <property type="gene ID" value="ANIA_01594"/>
</dbReference>
<dbReference type="GeneID" id="2875701"/>
<dbReference type="KEGG" id="ani:ANIA_01594"/>
<dbReference type="eggNOG" id="ENOG502QUXU">
    <property type="taxonomic scope" value="Eukaryota"/>
</dbReference>
<dbReference type="HOGENOM" id="CLU_005861_0_0_1"/>
<dbReference type="InParanoid" id="A0A1U8QHE3"/>
<dbReference type="OMA" id="PFTWTAC"/>
<dbReference type="OrthoDB" id="2343925at2759"/>
<dbReference type="BRENDA" id="4.2.3.30">
    <property type="organism ID" value="517"/>
</dbReference>
<dbReference type="UniPathway" id="UPA00213"/>
<dbReference type="Proteomes" id="UP000000560">
    <property type="component" value="Chromosome VII"/>
</dbReference>
<dbReference type="GO" id="GO:0016853">
    <property type="term" value="F:isomerase activity"/>
    <property type="evidence" value="ECO:0007669"/>
    <property type="project" value="UniProtKB-KW"/>
</dbReference>
<dbReference type="GO" id="GO:0000287">
    <property type="term" value="F:magnesium ion binding"/>
    <property type="evidence" value="ECO:0000318"/>
    <property type="project" value="GO_Central"/>
</dbReference>
<dbReference type="GO" id="GO:0010333">
    <property type="term" value="F:terpene synthase activity"/>
    <property type="evidence" value="ECO:0000318"/>
    <property type="project" value="GO_Central"/>
</dbReference>
<dbReference type="GO" id="GO:0016102">
    <property type="term" value="P:diterpenoid biosynthetic process"/>
    <property type="evidence" value="ECO:0000318"/>
    <property type="project" value="GO_Central"/>
</dbReference>
<dbReference type="FunFam" id="1.50.10.160:FF:000003">
    <property type="entry name" value="Aphidicolan-16-beta-ol synthase"/>
    <property type="match status" value="1"/>
</dbReference>
<dbReference type="FunFam" id="1.50.10.20:FF:000037">
    <property type="entry name" value="Terpene synthase family protein"/>
    <property type="match status" value="1"/>
</dbReference>
<dbReference type="Gene3D" id="1.50.10.160">
    <property type="match status" value="1"/>
</dbReference>
<dbReference type="Gene3D" id="1.50.10.20">
    <property type="match status" value="1"/>
</dbReference>
<dbReference type="InterPro" id="IPR017057">
    <property type="entry name" value="Ent-kaurene_synthase_fun"/>
</dbReference>
<dbReference type="InterPro" id="IPR050148">
    <property type="entry name" value="Terpene_synthase-like"/>
</dbReference>
<dbReference type="InterPro" id="IPR008930">
    <property type="entry name" value="Terpenoid_cyclase/PrenylTrfase"/>
</dbReference>
<dbReference type="PANTHER" id="PTHR31739:SF25">
    <property type="entry name" value="(E,E)-GERANYLLINALOOL SYNTHASE"/>
    <property type="match status" value="1"/>
</dbReference>
<dbReference type="PANTHER" id="PTHR31739">
    <property type="entry name" value="ENT-COPALYL DIPHOSPHATE SYNTHASE, CHLOROPLASTIC"/>
    <property type="match status" value="1"/>
</dbReference>
<dbReference type="PIRSF" id="PIRSF036498">
    <property type="entry name" value="Ent-kaurene_synthase_fungi"/>
    <property type="match status" value="1"/>
</dbReference>
<dbReference type="SUPFAM" id="SSF48239">
    <property type="entry name" value="Terpenoid cyclases/Protein prenyltransferases"/>
    <property type="match status" value="1"/>
</dbReference>
<name>PBCA_EMENI</name>